<gene>
    <name type="primary">yaaW</name>
    <name type="ordered locus">b0011</name>
    <name type="ordered locus">JW0010</name>
</gene>
<evidence type="ECO:0000305" key="1"/>
<evidence type="ECO:0000305" key="2">
    <source>
    </source>
</evidence>
<sequence length="237" mass="26665">MNVNYLNDSDLDFLQHCSEEQLANFARLLTHNEKGKTRLSSVLMRNELFKSMEGHPEQHRRNWQLIAGELQHFGGDSIANKLRGHGKLYRAILLDVSKRLKLKADKEMSTFEIEQQLLEQFLRNTWKKMDEEHKQEFLHAVDARVNELEELLPLLMKDKLLAKGVSHLLSSQLTRILRTHAAMSVLGHGLLRGAGLGGPVGAALNGVKAVSGSAYRVTIPAVLQIACLRRMVSATQV</sequence>
<proteinExistence type="inferred from homology"/>
<accession>P75617</accession>
<accession>Q2MCH9</accession>
<accession>Q47290</accession>
<name>YAAW_ECOLI</name>
<dbReference type="EMBL" id="X67700">
    <property type="protein sequence ID" value="CAA47934.1"/>
    <property type="molecule type" value="Genomic_DNA"/>
</dbReference>
<dbReference type="EMBL" id="U00096">
    <property type="protein sequence ID" value="AAC73122.1"/>
    <property type="molecule type" value="Genomic_DNA"/>
</dbReference>
<dbReference type="EMBL" id="AP009048">
    <property type="protein sequence ID" value="BAE76027.1"/>
    <property type="molecule type" value="Genomic_DNA"/>
</dbReference>
<dbReference type="PIR" id="C64721">
    <property type="entry name" value="C64721"/>
</dbReference>
<dbReference type="RefSeq" id="NP_414552.1">
    <property type="nucleotide sequence ID" value="NC_000913.3"/>
</dbReference>
<dbReference type="SMR" id="P75617"/>
<dbReference type="BioGRID" id="4259518">
    <property type="interactions" value="8"/>
</dbReference>
<dbReference type="DIP" id="DIP-11163N"/>
<dbReference type="FunCoup" id="P75617">
    <property type="interactions" value="18"/>
</dbReference>
<dbReference type="IntAct" id="P75617">
    <property type="interactions" value="3"/>
</dbReference>
<dbReference type="STRING" id="511145.b0011"/>
<dbReference type="PaxDb" id="511145-b0011"/>
<dbReference type="EnsemblBacteria" id="AAC73122">
    <property type="protein sequence ID" value="AAC73122"/>
    <property type="gene ID" value="b0011"/>
</dbReference>
<dbReference type="GeneID" id="944771"/>
<dbReference type="KEGG" id="ecj:JW0010"/>
<dbReference type="KEGG" id="eco:b0011"/>
<dbReference type="KEGG" id="ecoc:C3026_00060"/>
<dbReference type="PATRIC" id="fig|511145.12.peg.10"/>
<dbReference type="EchoBASE" id="EB4086"/>
<dbReference type="eggNOG" id="COG4735">
    <property type="taxonomic scope" value="Bacteria"/>
</dbReference>
<dbReference type="HOGENOM" id="CLU_072312_0_1_6"/>
<dbReference type="InParanoid" id="P75617"/>
<dbReference type="OMA" id="HIACLRQ"/>
<dbReference type="OrthoDB" id="9128717at2"/>
<dbReference type="PhylomeDB" id="P75617"/>
<dbReference type="BioCyc" id="EcoCyc:G6082-MONOMER"/>
<dbReference type="PRO" id="PR:P75617"/>
<dbReference type="Proteomes" id="UP000000625">
    <property type="component" value="Chromosome"/>
</dbReference>
<dbReference type="InterPro" id="IPR025217">
    <property type="entry name" value="DUF3944"/>
</dbReference>
<dbReference type="InterPro" id="IPR021150">
    <property type="entry name" value="Ubiq_cyt_c_chap"/>
</dbReference>
<dbReference type="NCBIfam" id="NF007593">
    <property type="entry name" value="PRK10236.1"/>
    <property type="match status" value="1"/>
</dbReference>
<dbReference type="Pfam" id="PF13099">
    <property type="entry name" value="DUF3944"/>
    <property type="match status" value="1"/>
</dbReference>
<dbReference type="Pfam" id="PF03981">
    <property type="entry name" value="Ubiq_cyt_C_chap"/>
    <property type="match status" value="1"/>
</dbReference>
<feature type="chain" id="PRO_0000216419" description="UPF0174 protein YaaW">
    <location>
        <begin position="1"/>
        <end position="237"/>
    </location>
</feature>
<feature type="sequence conflict" description="In Ref. 1; CAA47934." evidence="1" ref="1">
    <original>L</original>
    <variation>F</variation>
    <location>
        <position position="190"/>
    </location>
</feature>
<protein>
    <recommendedName>
        <fullName evidence="1">UPF0174 protein YaaW</fullName>
    </recommendedName>
</protein>
<organism>
    <name type="scientific">Escherichia coli (strain K12)</name>
    <dbReference type="NCBI Taxonomy" id="83333"/>
    <lineage>
        <taxon>Bacteria</taxon>
        <taxon>Pseudomonadati</taxon>
        <taxon>Pseudomonadota</taxon>
        <taxon>Gammaproteobacteria</taxon>
        <taxon>Enterobacterales</taxon>
        <taxon>Enterobacteriaceae</taxon>
        <taxon>Escherichia</taxon>
    </lineage>
</organism>
<comment type="similarity">
    <text evidence="1">Belongs to the UPF0174 family.</text>
</comment>
<comment type="caution">
    <text evidence="1 2">Gene overlaps with the mbiA open reading frame on the opposite strand (PubMed:18226237). Disruptions of one gene are also usually disruptions in the other.</text>
</comment>
<keyword id="KW-1185">Reference proteome</keyword>
<reference key="1">
    <citation type="journal article" date="1993" name="DNA Seq.">
        <title>Five open reading frames upstream of the dnaK gene of E. coli.</title>
        <authorList>
            <person name="James R."/>
            <person name="Dean D.O."/>
            <person name="Debbage J."/>
        </authorList>
    </citation>
    <scope>NUCLEOTIDE SEQUENCE [GENOMIC DNA]</scope>
</reference>
<reference key="2">
    <citation type="journal article" date="1997" name="Science">
        <title>The complete genome sequence of Escherichia coli K-12.</title>
        <authorList>
            <person name="Blattner F.R."/>
            <person name="Plunkett G. III"/>
            <person name="Bloch C.A."/>
            <person name="Perna N.T."/>
            <person name="Burland V."/>
            <person name="Riley M."/>
            <person name="Collado-Vides J."/>
            <person name="Glasner J.D."/>
            <person name="Rode C.K."/>
            <person name="Mayhew G.F."/>
            <person name="Gregor J."/>
            <person name="Davis N.W."/>
            <person name="Kirkpatrick H.A."/>
            <person name="Goeden M.A."/>
            <person name="Rose D.J."/>
            <person name="Mau B."/>
            <person name="Shao Y."/>
        </authorList>
    </citation>
    <scope>NUCLEOTIDE SEQUENCE [LARGE SCALE GENOMIC DNA]</scope>
    <source>
        <strain>K12 / MG1655 / ATCC 47076</strain>
    </source>
</reference>
<reference key="3">
    <citation type="journal article" date="2006" name="Mol. Syst. Biol.">
        <title>Highly accurate genome sequences of Escherichia coli K-12 strains MG1655 and W3110.</title>
        <authorList>
            <person name="Hayashi K."/>
            <person name="Morooka N."/>
            <person name="Yamamoto Y."/>
            <person name="Fujita K."/>
            <person name="Isono K."/>
            <person name="Choi S."/>
            <person name="Ohtsubo E."/>
            <person name="Baba T."/>
            <person name="Wanner B.L."/>
            <person name="Mori H."/>
            <person name="Horiuchi T."/>
        </authorList>
    </citation>
    <scope>NUCLEOTIDE SEQUENCE [LARGE SCALE GENOMIC DNA]</scope>
    <source>
        <strain>K12 / W3110 / ATCC 27325 / DSM 5911</strain>
    </source>
</reference>
<reference key="4">
    <citation type="journal article" date="2008" name="BMC Evol. Biol.">
        <title>The origin of a novel gene through overprinting in Escherichia coli.</title>
        <authorList>
            <person name="Delaye L."/>
            <person name="Deluna A."/>
            <person name="Lazcano A."/>
            <person name="Becerra A."/>
        </authorList>
    </citation>
    <scope>OVERLAP WITH MBIA</scope>
</reference>